<protein>
    <recommendedName>
        <fullName evidence="1">Acetate kinase</fullName>
        <ecNumber evidence="1">2.7.2.1</ecNumber>
    </recommendedName>
    <alternativeName>
        <fullName evidence="1">Acetokinase</fullName>
    </alternativeName>
</protein>
<evidence type="ECO:0000255" key="1">
    <source>
        <dbReference type="HAMAP-Rule" id="MF_00020"/>
    </source>
</evidence>
<name>ACKA_HALOH</name>
<keyword id="KW-0067">ATP-binding</keyword>
<keyword id="KW-0963">Cytoplasm</keyword>
<keyword id="KW-0418">Kinase</keyword>
<keyword id="KW-0460">Magnesium</keyword>
<keyword id="KW-0479">Metal-binding</keyword>
<keyword id="KW-0547">Nucleotide-binding</keyword>
<keyword id="KW-1185">Reference proteome</keyword>
<keyword id="KW-0808">Transferase</keyword>
<organism>
    <name type="scientific">Halothermothrix orenii (strain H 168 / OCM 544 / DSM 9562)</name>
    <dbReference type="NCBI Taxonomy" id="373903"/>
    <lineage>
        <taxon>Bacteria</taxon>
        <taxon>Bacillati</taxon>
        <taxon>Bacillota</taxon>
        <taxon>Clostridia</taxon>
        <taxon>Halanaerobiales</taxon>
        <taxon>Halothermotrichaceae</taxon>
        <taxon>Halothermothrix</taxon>
    </lineage>
</organism>
<dbReference type="EC" id="2.7.2.1" evidence="1"/>
<dbReference type="EMBL" id="CP001098">
    <property type="protein sequence ID" value="ACL69777.1"/>
    <property type="molecule type" value="Genomic_DNA"/>
</dbReference>
<dbReference type="RefSeq" id="WP_012635962.1">
    <property type="nucleotide sequence ID" value="NC_011899.1"/>
</dbReference>
<dbReference type="SMR" id="B8CWV8"/>
<dbReference type="STRING" id="373903.Hore_10210"/>
<dbReference type="KEGG" id="hor:Hore_10210"/>
<dbReference type="eggNOG" id="COG0282">
    <property type="taxonomic scope" value="Bacteria"/>
</dbReference>
<dbReference type="HOGENOM" id="CLU_020352_0_1_9"/>
<dbReference type="OrthoDB" id="9802453at2"/>
<dbReference type="UniPathway" id="UPA00340">
    <property type="reaction ID" value="UER00458"/>
</dbReference>
<dbReference type="Proteomes" id="UP000000719">
    <property type="component" value="Chromosome"/>
</dbReference>
<dbReference type="GO" id="GO:0005737">
    <property type="term" value="C:cytoplasm"/>
    <property type="evidence" value="ECO:0007669"/>
    <property type="project" value="UniProtKB-SubCell"/>
</dbReference>
<dbReference type="GO" id="GO:0008776">
    <property type="term" value="F:acetate kinase activity"/>
    <property type="evidence" value="ECO:0007669"/>
    <property type="project" value="UniProtKB-UniRule"/>
</dbReference>
<dbReference type="GO" id="GO:0005524">
    <property type="term" value="F:ATP binding"/>
    <property type="evidence" value="ECO:0007669"/>
    <property type="project" value="UniProtKB-KW"/>
</dbReference>
<dbReference type="GO" id="GO:0000287">
    <property type="term" value="F:magnesium ion binding"/>
    <property type="evidence" value="ECO:0007669"/>
    <property type="project" value="UniProtKB-UniRule"/>
</dbReference>
<dbReference type="GO" id="GO:0006083">
    <property type="term" value="P:acetate metabolic process"/>
    <property type="evidence" value="ECO:0007669"/>
    <property type="project" value="TreeGrafter"/>
</dbReference>
<dbReference type="GO" id="GO:0006085">
    <property type="term" value="P:acetyl-CoA biosynthetic process"/>
    <property type="evidence" value="ECO:0007669"/>
    <property type="project" value="UniProtKB-UniRule"/>
</dbReference>
<dbReference type="CDD" id="cd24010">
    <property type="entry name" value="ASKHA_NBD_AcK_PK"/>
    <property type="match status" value="1"/>
</dbReference>
<dbReference type="Gene3D" id="3.30.420.40">
    <property type="match status" value="2"/>
</dbReference>
<dbReference type="HAMAP" id="MF_00020">
    <property type="entry name" value="Acetate_kinase"/>
    <property type="match status" value="1"/>
</dbReference>
<dbReference type="InterPro" id="IPR004372">
    <property type="entry name" value="Ac/propionate_kinase"/>
</dbReference>
<dbReference type="InterPro" id="IPR000890">
    <property type="entry name" value="Aliphatic_acid_kin_short-chain"/>
</dbReference>
<dbReference type="InterPro" id="IPR023865">
    <property type="entry name" value="Aliphatic_acid_kinase_CS"/>
</dbReference>
<dbReference type="InterPro" id="IPR043129">
    <property type="entry name" value="ATPase_NBD"/>
</dbReference>
<dbReference type="NCBIfam" id="TIGR00016">
    <property type="entry name" value="ackA"/>
    <property type="match status" value="1"/>
</dbReference>
<dbReference type="PANTHER" id="PTHR21060">
    <property type="entry name" value="ACETATE KINASE"/>
    <property type="match status" value="1"/>
</dbReference>
<dbReference type="PANTHER" id="PTHR21060:SF15">
    <property type="entry name" value="ACETATE KINASE-RELATED"/>
    <property type="match status" value="1"/>
</dbReference>
<dbReference type="Pfam" id="PF00871">
    <property type="entry name" value="Acetate_kinase"/>
    <property type="match status" value="1"/>
</dbReference>
<dbReference type="PIRSF" id="PIRSF000722">
    <property type="entry name" value="Acetate_prop_kin"/>
    <property type="match status" value="1"/>
</dbReference>
<dbReference type="PRINTS" id="PR00471">
    <property type="entry name" value="ACETATEKNASE"/>
</dbReference>
<dbReference type="SUPFAM" id="SSF53067">
    <property type="entry name" value="Actin-like ATPase domain"/>
    <property type="match status" value="2"/>
</dbReference>
<dbReference type="PROSITE" id="PS01075">
    <property type="entry name" value="ACETATE_KINASE_1"/>
    <property type="match status" value="1"/>
</dbReference>
<dbReference type="PROSITE" id="PS01076">
    <property type="entry name" value="ACETATE_KINASE_2"/>
    <property type="match status" value="1"/>
</dbReference>
<feature type="chain" id="PRO_1000116803" description="Acetate kinase">
    <location>
        <begin position="1"/>
        <end position="398"/>
    </location>
</feature>
<feature type="active site" description="Proton donor/acceptor" evidence="1">
    <location>
        <position position="148"/>
    </location>
</feature>
<feature type="binding site" evidence="1">
    <location>
        <position position="7"/>
    </location>
    <ligand>
        <name>Mg(2+)</name>
        <dbReference type="ChEBI" id="CHEBI:18420"/>
    </ligand>
</feature>
<feature type="binding site" evidence="1">
    <location>
        <position position="14"/>
    </location>
    <ligand>
        <name>ATP</name>
        <dbReference type="ChEBI" id="CHEBI:30616"/>
    </ligand>
</feature>
<feature type="binding site" evidence="1">
    <location>
        <position position="91"/>
    </location>
    <ligand>
        <name>substrate</name>
    </ligand>
</feature>
<feature type="binding site" evidence="1">
    <location>
        <begin position="208"/>
        <end position="212"/>
    </location>
    <ligand>
        <name>ATP</name>
        <dbReference type="ChEBI" id="CHEBI:30616"/>
    </ligand>
</feature>
<feature type="binding site" evidence="1">
    <location>
        <begin position="283"/>
        <end position="285"/>
    </location>
    <ligand>
        <name>ATP</name>
        <dbReference type="ChEBI" id="CHEBI:30616"/>
    </ligand>
</feature>
<feature type="binding site" evidence="1">
    <location>
        <begin position="331"/>
        <end position="335"/>
    </location>
    <ligand>
        <name>ATP</name>
        <dbReference type="ChEBI" id="CHEBI:30616"/>
    </ligand>
</feature>
<feature type="binding site" evidence="1">
    <location>
        <position position="384"/>
    </location>
    <ligand>
        <name>Mg(2+)</name>
        <dbReference type="ChEBI" id="CHEBI:18420"/>
    </ligand>
</feature>
<feature type="site" description="Transition state stabilizer" evidence="1">
    <location>
        <position position="180"/>
    </location>
</feature>
<feature type="site" description="Transition state stabilizer" evidence="1">
    <location>
        <position position="241"/>
    </location>
</feature>
<reference key="1">
    <citation type="journal article" date="2009" name="PLoS ONE">
        <title>Genome analysis of the anaerobic thermohalophilic bacterium Halothermothrix orenii.</title>
        <authorList>
            <person name="Mavromatis K."/>
            <person name="Ivanova N."/>
            <person name="Anderson I."/>
            <person name="Lykidis A."/>
            <person name="Hooper S.D."/>
            <person name="Sun H."/>
            <person name="Kunin V."/>
            <person name="Lapidus A."/>
            <person name="Hugenholtz P."/>
            <person name="Patel B."/>
            <person name="Kyrpides N.C."/>
        </authorList>
    </citation>
    <scope>NUCLEOTIDE SEQUENCE [LARGE SCALE GENOMIC DNA]</scope>
    <source>
        <strain>H 168 / OCM 544 / DSM 9562</strain>
    </source>
</reference>
<proteinExistence type="inferred from homology"/>
<gene>
    <name evidence="1" type="primary">ackA</name>
    <name type="ordered locus">Hore_10210</name>
</gene>
<accession>B8CWV8</accession>
<comment type="function">
    <text evidence="1">Catalyzes the formation of acetyl phosphate from acetate and ATP. Can also catalyze the reverse reaction.</text>
</comment>
<comment type="catalytic activity">
    <reaction evidence="1">
        <text>acetate + ATP = acetyl phosphate + ADP</text>
        <dbReference type="Rhea" id="RHEA:11352"/>
        <dbReference type="ChEBI" id="CHEBI:22191"/>
        <dbReference type="ChEBI" id="CHEBI:30089"/>
        <dbReference type="ChEBI" id="CHEBI:30616"/>
        <dbReference type="ChEBI" id="CHEBI:456216"/>
        <dbReference type="EC" id="2.7.2.1"/>
    </reaction>
</comment>
<comment type="cofactor">
    <cofactor evidence="1">
        <name>Mg(2+)</name>
        <dbReference type="ChEBI" id="CHEBI:18420"/>
    </cofactor>
    <cofactor evidence="1">
        <name>Mn(2+)</name>
        <dbReference type="ChEBI" id="CHEBI:29035"/>
    </cofactor>
    <text evidence="1">Mg(2+). Can also accept Mn(2+).</text>
</comment>
<comment type="pathway">
    <text evidence="1">Metabolic intermediate biosynthesis; acetyl-CoA biosynthesis; acetyl-CoA from acetate: step 1/2.</text>
</comment>
<comment type="subunit">
    <text evidence="1">Homodimer.</text>
</comment>
<comment type="subcellular location">
    <subcellularLocation>
        <location evidence="1">Cytoplasm</location>
    </subcellularLocation>
</comment>
<comment type="similarity">
    <text evidence="1">Belongs to the acetokinase family.</text>
</comment>
<sequence>MKILVLNSGSSSLKYQLFDMEKETVMAKGVVQRIGIDNSFLEHENYRGEETTIETDIPDHNRGIQLVIDTLQDEKYGVLNNMEEIDAVGHRVVHGGEKFAESTLITDEVIKQIEEVSELAPLHNPHNLTGIRVCSKLMPGIPQVAVFDTAFHQTMPRKAYVYALPYEYYEKYGIRRYGFHGTSHKYVAERAARLMDKPLEELKIITCHLGNGASVAAIDAGKSVDTSMGLTPLEGLVMGTRCGDIDPAIIPFIMDKENLDIKEVDNVLNKKSGLYGVSGISNDSRDVEEASKDGNERATIALEIFKYRVKKYIGAYTAVMGGVDAVVFTAGIGENAIEMRESIVEELGFLGVKLDRDANNNRGKEIEISTKDSRTKIFVIPTNEELVIARDTARIVES</sequence>